<sequence>MESTHEYCIMNTTPNIHAMIVAAGRGSRFGASIAKQYTLLQGQTLLQHSVARLAESNYIDRCLLVVAQDDSTAQTLSFALPIYYAIGGTERWQSVQAGVEAMINAGADESDLVVIHDAARPAVPTHDIDAVIQAAMLEPYGAILATPVADTLKQSYIASNTLSTPAYEAPLSLQQLNTQPELANSQSGYDTLHTYAQKTIDRSHMWQAQTPQVFRLGQLQQVLNYVTKHNLAITDEASAFEHLELPIRLVTGSRQNIKLTYPDDIILLTAILKAQFASIS</sequence>
<accession>Q1Q9K8</accession>
<dbReference type="EC" id="2.7.7.60" evidence="1"/>
<dbReference type="EMBL" id="CP000323">
    <property type="protein sequence ID" value="ABE75645.1"/>
    <property type="molecule type" value="Genomic_DNA"/>
</dbReference>
<dbReference type="RefSeq" id="WP_011514188.1">
    <property type="nucleotide sequence ID" value="NC_007969.1"/>
</dbReference>
<dbReference type="SMR" id="Q1Q9K8"/>
<dbReference type="STRING" id="335284.Pcryo_1868"/>
<dbReference type="KEGG" id="pcr:Pcryo_1868"/>
<dbReference type="eggNOG" id="COG1211">
    <property type="taxonomic scope" value="Bacteria"/>
</dbReference>
<dbReference type="HOGENOM" id="CLU_061281_3_0_6"/>
<dbReference type="UniPathway" id="UPA00056">
    <property type="reaction ID" value="UER00093"/>
</dbReference>
<dbReference type="Proteomes" id="UP000002425">
    <property type="component" value="Chromosome"/>
</dbReference>
<dbReference type="GO" id="GO:0050518">
    <property type="term" value="F:2-C-methyl-D-erythritol 4-phosphate cytidylyltransferase activity"/>
    <property type="evidence" value="ECO:0007669"/>
    <property type="project" value="UniProtKB-UniRule"/>
</dbReference>
<dbReference type="GO" id="GO:0019288">
    <property type="term" value="P:isopentenyl diphosphate biosynthetic process, methylerythritol 4-phosphate pathway"/>
    <property type="evidence" value="ECO:0007669"/>
    <property type="project" value="UniProtKB-UniRule"/>
</dbReference>
<dbReference type="CDD" id="cd02516">
    <property type="entry name" value="CDP-ME_synthetase"/>
    <property type="match status" value="1"/>
</dbReference>
<dbReference type="Gene3D" id="3.90.550.10">
    <property type="entry name" value="Spore Coat Polysaccharide Biosynthesis Protein SpsA, Chain A"/>
    <property type="match status" value="1"/>
</dbReference>
<dbReference type="HAMAP" id="MF_00108">
    <property type="entry name" value="IspD"/>
    <property type="match status" value="1"/>
</dbReference>
<dbReference type="InterPro" id="IPR001228">
    <property type="entry name" value="IspD"/>
</dbReference>
<dbReference type="InterPro" id="IPR034683">
    <property type="entry name" value="IspD/TarI"/>
</dbReference>
<dbReference type="InterPro" id="IPR050088">
    <property type="entry name" value="IspD/TarI_cytidylyltransf_bact"/>
</dbReference>
<dbReference type="InterPro" id="IPR018294">
    <property type="entry name" value="ISPD_synthase_CS"/>
</dbReference>
<dbReference type="InterPro" id="IPR029044">
    <property type="entry name" value="Nucleotide-diphossugar_trans"/>
</dbReference>
<dbReference type="PANTHER" id="PTHR32125">
    <property type="entry name" value="2-C-METHYL-D-ERYTHRITOL 4-PHOSPHATE CYTIDYLYLTRANSFERASE, CHLOROPLASTIC"/>
    <property type="match status" value="1"/>
</dbReference>
<dbReference type="PANTHER" id="PTHR32125:SF4">
    <property type="entry name" value="2-C-METHYL-D-ERYTHRITOL 4-PHOSPHATE CYTIDYLYLTRANSFERASE, CHLOROPLASTIC"/>
    <property type="match status" value="1"/>
</dbReference>
<dbReference type="Pfam" id="PF01128">
    <property type="entry name" value="IspD"/>
    <property type="match status" value="2"/>
</dbReference>
<dbReference type="SUPFAM" id="SSF53448">
    <property type="entry name" value="Nucleotide-diphospho-sugar transferases"/>
    <property type="match status" value="1"/>
</dbReference>
<dbReference type="PROSITE" id="PS01295">
    <property type="entry name" value="ISPD"/>
    <property type="match status" value="1"/>
</dbReference>
<evidence type="ECO:0000255" key="1">
    <source>
        <dbReference type="HAMAP-Rule" id="MF_00108"/>
    </source>
</evidence>
<organism>
    <name type="scientific">Psychrobacter cryohalolentis (strain ATCC BAA-1226 / DSM 17306 / VKM B-2378 / K5)</name>
    <dbReference type="NCBI Taxonomy" id="335284"/>
    <lineage>
        <taxon>Bacteria</taxon>
        <taxon>Pseudomonadati</taxon>
        <taxon>Pseudomonadota</taxon>
        <taxon>Gammaproteobacteria</taxon>
        <taxon>Moraxellales</taxon>
        <taxon>Moraxellaceae</taxon>
        <taxon>Psychrobacter</taxon>
    </lineage>
</organism>
<reference key="1">
    <citation type="submission" date="2006-03" db="EMBL/GenBank/DDBJ databases">
        <title>Complete sequence of chromosome of Psychrobacter cryohalolentis K5.</title>
        <authorList>
            <consortium name="US DOE Joint Genome Institute"/>
            <person name="Copeland A."/>
            <person name="Lucas S."/>
            <person name="Lapidus A."/>
            <person name="Barry K."/>
            <person name="Detter J.C."/>
            <person name="Glavina T."/>
            <person name="Hammon N."/>
            <person name="Israni S."/>
            <person name="Dalin E."/>
            <person name="Tice H."/>
            <person name="Pitluck S."/>
            <person name="Brettin T."/>
            <person name="Bruce D."/>
            <person name="Han C."/>
            <person name="Tapia R."/>
            <person name="Sims D.R."/>
            <person name="Gilna P."/>
            <person name="Schmutz J."/>
            <person name="Larimer F."/>
            <person name="Land M."/>
            <person name="Hauser L."/>
            <person name="Kyrpides N."/>
            <person name="Kim E."/>
            <person name="Richardson P."/>
        </authorList>
    </citation>
    <scope>NUCLEOTIDE SEQUENCE [LARGE SCALE GENOMIC DNA]</scope>
    <source>
        <strain>ATCC BAA-1226 / DSM 17306 / VKM B-2378 / K5</strain>
    </source>
</reference>
<proteinExistence type="inferred from homology"/>
<keyword id="KW-0414">Isoprene biosynthesis</keyword>
<keyword id="KW-0548">Nucleotidyltransferase</keyword>
<keyword id="KW-0808">Transferase</keyword>
<gene>
    <name evidence="1" type="primary">ispD</name>
    <name type="ordered locus">Pcryo_1868</name>
</gene>
<protein>
    <recommendedName>
        <fullName evidence="1">2-C-methyl-D-erythritol 4-phosphate cytidylyltransferase</fullName>
        <ecNumber evidence="1">2.7.7.60</ecNumber>
    </recommendedName>
    <alternativeName>
        <fullName evidence="1">4-diphosphocytidyl-2C-methyl-D-erythritol synthase</fullName>
    </alternativeName>
    <alternativeName>
        <fullName evidence="1">MEP cytidylyltransferase</fullName>
        <shortName evidence="1">MCT</shortName>
    </alternativeName>
</protein>
<name>ISPD_PSYCK</name>
<comment type="function">
    <text evidence="1">Catalyzes the formation of 4-diphosphocytidyl-2-C-methyl-D-erythritol from CTP and 2-C-methyl-D-erythritol 4-phosphate (MEP).</text>
</comment>
<comment type="catalytic activity">
    <reaction evidence="1">
        <text>2-C-methyl-D-erythritol 4-phosphate + CTP + H(+) = 4-CDP-2-C-methyl-D-erythritol + diphosphate</text>
        <dbReference type="Rhea" id="RHEA:13429"/>
        <dbReference type="ChEBI" id="CHEBI:15378"/>
        <dbReference type="ChEBI" id="CHEBI:33019"/>
        <dbReference type="ChEBI" id="CHEBI:37563"/>
        <dbReference type="ChEBI" id="CHEBI:57823"/>
        <dbReference type="ChEBI" id="CHEBI:58262"/>
        <dbReference type="EC" id="2.7.7.60"/>
    </reaction>
</comment>
<comment type="pathway">
    <text evidence="1">Isoprenoid biosynthesis; isopentenyl diphosphate biosynthesis via DXP pathway; isopentenyl diphosphate from 1-deoxy-D-xylulose 5-phosphate: step 2/6.</text>
</comment>
<comment type="similarity">
    <text evidence="1">Belongs to the IspD/TarI cytidylyltransferase family. IspD subfamily.</text>
</comment>
<feature type="chain" id="PRO_1000022942" description="2-C-methyl-D-erythritol 4-phosphate cytidylyltransferase">
    <location>
        <begin position="1"/>
        <end position="280"/>
    </location>
</feature>
<feature type="site" description="Transition state stabilizer" evidence="1">
    <location>
        <position position="28"/>
    </location>
</feature>
<feature type="site" description="Transition state stabilizer" evidence="1">
    <location>
        <position position="35"/>
    </location>
</feature>
<feature type="site" description="Positions MEP for the nucleophilic attack" evidence="1">
    <location>
        <position position="202"/>
    </location>
</feature>
<feature type="site" description="Positions MEP for the nucleophilic attack" evidence="1">
    <location>
        <position position="258"/>
    </location>
</feature>